<organism>
    <name type="scientific">Rhyparobia maderae</name>
    <name type="common">Madeira cockroach</name>
    <name type="synonym">Leucophaea maderae</name>
    <dbReference type="NCBI Taxonomy" id="36963"/>
    <lineage>
        <taxon>Eukaryota</taxon>
        <taxon>Metazoa</taxon>
        <taxon>Ecdysozoa</taxon>
        <taxon>Arthropoda</taxon>
        <taxon>Hexapoda</taxon>
        <taxon>Insecta</taxon>
        <taxon>Pterygota</taxon>
        <taxon>Neoptera</taxon>
        <taxon>Polyneoptera</taxon>
        <taxon>Dictyoptera</taxon>
        <taxon>Blattodea</taxon>
        <taxon>Blaberoidea</taxon>
        <taxon>Blaberidae</taxon>
        <taxon>Oxyhaloinae</taxon>
        <taxon>Rhyparobia</taxon>
    </lineage>
</organism>
<keyword id="KW-0027">Amidation</keyword>
<keyword id="KW-0903">Direct protein sequencing</keyword>
<keyword id="KW-0527">Neuropeptide</keyword>
<keyword id="KW-0964">Secreted</keyword>
<evidence type="ECO:0000269" key="1">
    <source>
    </source>
</evidence>
<name>TRP6_RHYMA</name>
<protein>
    <recommendedName>
        <fullName>Tachykinin-related peptide 6</fullName>
        <shortName>LemTRP 6</shortName>
    </recommendedName>
</protein>
<proteinExistence type="evidence at protein level"/>
<feature type="peptide" id="PRO_0000044441" description="Tachykinin-related peptide 6">
    <location>
        <begin position="1"/>
        <end position="10"/>
    </location>
</feature>
<feature type="modified residue" description="Arginine amide" evidence="1">
    <location>
        <position position="10"/>
    </location>
</feature>
<comment type="function">
    <text>Myoactive peptide. Increases the amplitude and frequency of spontaneous contractions and tonus of hindgut muscle.</text>
</comment>
<comment type="subcellular location">
    <subcellularLocation>
        <location>Secreted</location>
    </subcellularLocation>
</comment>
<comment type="tissue specificity">
    <text>Brain.</text>
</comment>
<comment type="mass spectrometry" mass="1023.0" method="MALDI" evidence="1"/>
<sequence length="10" mass="1024">APAAGFFGMR</sequence>
<reference key="1">
    <citation type="journal article" date="1997" name="Peptides">
        <title>Seven tachykinin-related peptides isolated from the brain of the madeira cockroach; evidence for tissue-specific expression of isoforms.</title>
        <authorList>
            <person name="Muren J.E."/>
            <person name="Naessel D.R."/>
        </authorList>
    </citation>
    <scope>PROTEIN SEQUENCE</scope>
    <scope>AMIDATION AT ARG-10</scope>
    <scope>MASS SPECTROMETRY</scope>
    <source>
        <tissue>Brain</tissue>
    </source>
</reference>
<accession>P81738</accession>
<dbReference type="GO" id="GO:0005576">
    <property type="term" value="C:extracellular region"/>
    <property type="evidence" value="ECO:0007669"/>
    <property type="project" value="UniProtKB-SubCell"/>
</dbReference>
<dbReference type="GO" id="GO:0007218">
    <property type="term" value="P:neuropeptide signaling pathway"/>
    <property type="evidence" value="ECO:0007669"/>
    <property type="project" value="UniProtKB-KW"/>
</dbReference>